<protein>
    <recommendedName>
        <fullName evidence="1">Queuine tRNA-ribosyltransferase</fullName>
        <ecNumber evidence="1">2.4.2.29</ecNumber>
    </recommendedName>
    <alternativeName>
        <fullName evidence="1">Guanine insertion enzyme</fullName>
    </alternativeName>
    <alternativeName>
        <fullName evidence="1">tRNA-guanine transglycosylase</fullName>
    </alternativeName>
</protein>
<proteinExistence type="inferred from homology"/>
<sequence length="375" mass="42793">MFNIIKNDKNSNARIGVLELPHGKVTTPCFMPVGTLGVMKALKHDVLEKLGCNLMLANTYHLYLRPGIDVIKEYGSLHNFTTWNKNFLTDSGGFQVFSLSNFRKIETEGVDFKSHIDGSRHYFTPESVFKMQEIFESDIIMALDICSSYGIDYSEASLYANITTSWARRTLRAYENRKEGYDGFLFLITQGNFFKDLRKRSTEAILELNSPGIAIGGISVGEPRDKYLEILEYNSSLIPKDKPKYVMGIGTPHYILDAIYYGIDIFDCVNPTRIARHGSLLTDNGILRIKRAGFNVDTSPIEQDCSCTLCTRYSRGYLRHLIKSGETLGVMLASEHNIHYMFRLIQKARNAIMNDDFTQFRKLYLSKYDEGNFNE</sequence>
<organism>
    <name type="scientific">Borrelia hermsii (strain HS1 / DAH)</name>
    <dbReference type="NCBI Taxonomy" id="314723"/>
    <lineage>
        <taxon>Bacteria</taxon>
        <taxon>Pseudomonadati</taxon>
        <taxon>Spirochaetota</taxon>
        <taxon>Spirochaetia</taxon>
        <taxon>Spirochaetales</taxon>
        <taxon>Borreliaceae</taxon>
        <taxon>Borrelia</taxon>
    </lineage>
</organism>
<evidence type="ECO:0000255" key="1">
    <source>
        <dbReference type="HAMAP-Rule" id="MF_00168"/>
    </source>
</evidence>
<accession>B2S1F3</accession>
<feature type="chain" id="PRO_1000097532" description="Queuine tRNA-ribosyltransferase">
    <location>
        <begin position="1"/>
        <end position="375"/>
    </location>
</feature>
<feature type="region of interest" description="RNA binding" evidence="1">
    <location>
        <begin position="248"/>
        <end position="254"/>
    </location>
</feature>
<feature type="region of interest" description="RNA binding; important for wobble base 34 recognition" evidence="1">
    <location>
        <begin position="272"/>
        <end position="276"/>
    </location>
</feature>
<feature type="active site" description="Proton acceptor" evidence="1">
    <location>
        <position position="90"/>
    </location>
</feature>
<feature type="active site" description="Nucleophile" evidence="1">
    <location>
        <position position="267"/>
    </location>
</feature>
<feature type="binding site" evidence="1">
    <location>
        <begin position="90"/>
        <end position="94"/>
    </location>
    <ligand>
        <name>substrate</name>
    </ligand>
</feature>
<feature type="binding site" evidence="1">
    <location>
        <position position="144"/>
    </location>
    <ligand>
        <name>substrate</name>
    </ligand>
</feature>
<feature type="binding site" evidence="1">
    <location>
        <position position="190"/>
    </location>
    <ligand>
        <name>substrate</name>
    </ligand>
</feature>
<feature type="binding site" evidence="1">
    <location>
        <position position="217"/>
    </location>
    <ligand>
        <name>substrate</name>
    </ligand>
</feature>
<feature type="binding site" evidence="1">
    <location>
        <position position="305"/>
    </location>
    <ligand>
        <name>Zn(2+)</name>
        <dbReference type="ChEBI" id="CHEBI:29105"/>
    </ligand>
</feature>
<feature type="binding site" evidence="1">
    <location>
        <position position="307"/>
    </location>
    <ligand>
        <name>Zn(2+)</name>
        <dbReference type="ChEBI" id="CHEBI:29105"/>
    </ligand>
</feature>
<feature type="binding site" evidence="1">
    <location>
        <position position="310"/>
    </location>
    <ligand>
        <name>Zn(2+)</name>
        <dbReference type="ChEBI" id="CHEBI:29105"/>
    </ligand>
</feature>
<feature type="binding site" evidence="1">
    <location>
        <position position="336"/>
    </location>
    <ligand>
        <name>Zn(2+)</name>
        <dbReference type="ChEBI" id="CHEBI:29105"/>
    </ligand>
</feature>
<comment type="function">
    <text evidence="1">Catalyzes the base-exchange of a guanine (G) residue with the queuine precursor 7-aminomethyl-7-deazaguanine (PreQ1) at position 34 (anticodon wobble position) in tRNAs with GU(N) anticodons (tRNA-Asp, -Asn, -His and -Tyr). Catalysis occurs through a double-displacement mechanism. The nucleophile active site attacks the C1' of nucleotide 34 to detach the guanine base from the RNA, forming a covalent enzyme-RNA intermediate. The proton acceptor active site deprotonates the incoming PreQ1, allowing a nucleophilic attack on the C1' of the ribose to form the product. After dissociation, two additional enzymatic reactions on the tRNA convert PreQ1 to queuine (Q), resulting in the hypermodified nucleoside queuosine (7-(((4,5-cis-dihydroxy-2-cyclopenten-1-yl)amino)methyl)-7-deazaguanosine).</text>
</comment>
<comment type="catalytic activity">
    <reaction evidence="1">
        <text>7-aminomethyl-7-carbaguanine + guanosine(34) in tRNA = 7-aminomethyl-7-carbaguanosine(34) in tRNA + guanine</text>
        <dbReference type="Rhea" id="RHEA:24104"/>
        <dbReference type="Rhea" id="RHEA-COMP:10341"/>
        <dbReference type="Rhea" id="RHEA-COMP:10342"/>
        <dbReference type="ChEBI" id="CHEBI:16235"/>
        <dbReference type="ChEBI" id="CHEBI:58703"/>
        <dbReference type="ChEBI" id="CHEBI:74269"/>
        <dbReference type="ChEBI" id="CHEBI:82833"/>
        <dbReference type="EC" id="2.4.2.29"/>
    </reaction>
</comment>
<comment type="cofactor">
    <cofactor evidence="1">
        <name>Zn(2+)</name>
        <dbReference type="ChEBI" id="CHEBI:29105"/>
    </cofactor>
    <text evidence="1">Binds 1 zinc ion per subunit.</text>
</comment>
<comment type="pathway">
    <text evidence="1">tRNA modification; tRNA-queuosine biosynthesis.</text>
</comment>
<comment type="subunit">
    <text evidence="1">Homodimer. Within each dimer, one monomer is responsible for RNA recognition and catalysis, while the other monomer binds to the replacement base PreQ1.</text>
</comment>
<comment type="similarity">
    <text evidence="1">Belongs to the queuine tRNA-ribosyltransferase family.</text>
</comment>
<dbReference type="EC" id="2.4.2.29" evidence="1"/>
<dbReference type="EMBL" id="CP000048">
    <property type="protein sequence ID" value="AAX17306.1"/>
    <property type="molecule type" value="Genomic_DNA"/>
</dbReference>
<dbReference type="RefSeq" id="WP_012422556.1">
    <property type="nucleotide sequence ID" value="NZ_CP073136.1"/>
</dbReference>
<dbReference type="SMR" id="B2S1F3"/>
<dbReference type="GeneID" id="71843642"/>
<dbReference type="KEGG" id="bhr:BH0809"/>
<dbReference type="HOGENOM" id="CLU_022060_0_1_12"/>
<dbReference type="UniPathway" id="UPA00392"/>
<dbReference type="Proteomes" id="UP000008834">
    <property type="component" value="Chromosome"/>
</dbReference>
<dbReference type="GO" id="GO:0005829">
    <property type="term" value="C:cytosol"/>
    <property type="evidence" value="ECO:0007669"/>
    <property type="project" value="TreeGrafter"/>
</dbReference>
<dbReference type="GO" id="GO:0046872">
    <property type="term" value="F:metal ion binding"/>
    <property type="evidence" value="ECO:0007669"/>
    <property type="project" value="UniProtKB-KW"/>
</dbReference>
<dbReference type="GO" id="GO:0008479">
    <property type="term" value="F:tRNA-guanosine(34) queuine transglycosylase activity"/>
    <property type="evidence" value="ECO:0007669"/>
    <property type="project" value="UniProtKB-UniRule"/>
</dbReference>
<dbReference type="GO" id="GO:0008616">
    <property type="term" value="P:queuosine biosynthetic process"/>
    <property type="evidence" value="ECO:0007669"/>
    <property type="project" value="UniProtKB-UniRule"/>
</dbReference>
<dbReference type="GO" id="GO:0002099">
    <property type="term" value="P:tRNA wobble guanine modification"/>
    <property type="evidence" value="ECO:0007669"/>
    <property type="project" value="TreeGrafter"/>
</dbReference>
<dbReference type="GO" id="GO:0101030">
    <property type="term" value="P:tRNA-guanine transglycosylation"/>
    <property type="evidence" value="ECO:0007669"/>
    <property type="project" value="InterPro"/>
</dbReference>
<dbReference type="Gene3D" id="3.20.20.105">
    <property type="entry name" value="Queuine tRNA-ribosyltransferase-like"/>
    <property type="match status" value="1"/>
</dbReference>
<dbReference type="HAMAP" id="MF_00168">
    <property type="entry name" value="Q_tRNA_Tgt"/>
    <property type="match status" value="1"/>
</dbReference>
<dbReference type="InterPro" id="IPR050076">
    <property type="entry name" value="ArchSynthase1/Queuine_TRR"/>
</dbReference>
<dbReference type="InterPro" id="IPR004803">
    <property type="entry name" value="TGT"/>
</dbReference>
<dbReference type="InterPro" id="IPR036511">
    <property type="entry name" value="TGT-like_sf"/>
</dbReference>
<dbReference type="InterPro" id="IPR002616">
    <property type="entry name" value="tRNA_ribo_trans-like"/>
</dbReference>
<dbReference type="NCBIfam" id="TIGR00430">
    <property type="entry name" value="Q_tRNA_tgt"/>
    <property type="match status" value="1"/>
</dbReference>
<dbReference type="NCBIfam" id="TIGR00449">
    <property type="entry name" value="tgt_general"/>
    <property type="match status" value="1"/>
</dbReference>
<dbReference type="PANTHER" id="PTHR46499">
    <property type="entry name" value="QUEUINE TRNA-RIBOSYLTRANSFERASE"/>
    <property type="match status" value="1"/>
</dbReference>
<dbReference type="PANTHER" id="PTHR46499:SF1">
    <property type="entry name" value="QUEUINE TRNA-RIBOSYLTRANSFERASE"/>
    <property type="match status" value="1"/>
</dbReference>
<dbReference type="Pfam" id="PF01702">
    <property type="entry name" value="TGT"/>
    <property type="match status" value="1"/>
</dbReference>
<dbReference type="SUPFAM" id="SSF51713">
    <property type="entry name" value="tRNA-guanine transglycosylase"/>
    <property type="match status" value="1"/>
</dbReference>
<keyword id="KW-0328">Glycosyltransferase</keyword>
<keyword id="KW-0479">Metal-binding</keyword>
<keyword id="KW-0671">Queuosine biosynthesis</keyword>
<keyword id="KW-0808">Transferase</keyword>
<keyword id="KW-0819">tRNA processing</keyword>
<keyword id="KW-0862">Zinc</keyword>
<name>TGT_BORHD</name>
<gene>
    <name evidence="1" type="primary">tgt</name>
    <name type="ordered locus">BH0809</name>
</gene>
<reference key="1">
    <citation type="submission" date="2004-12" db="EMBL/GenBank/DDBJ databases">
        <title>The genome sequence of Borrelia hermsii and Borrelia turicatae: comparative analysis of two agents of endemic N. America relapsing fever.</title>
        <authorList>
            <person name="Porcella S.F."/>
            <person name="Raffel S.J."/>
            <person name="Schrumpf M.E."/>
            <person name="Montgomery B."/>
            <person name="Smith T."/>
            <person name="Schwan T.G."/>
        </authorList>
    </citation>
    <scope>NUCLEOTIDE SEQUENCE [LARGE SCALE GENOMIC DNA]</scope>
    <source>
        <strain>HS1 / DAH</strain>
    </source>
</reference>